<protein>
    <recommendedName>
        <fullName>Uncharacterized protein C4C3.09</fullName>
    </recommendedName>
</protein>
<accession>O43062</accession>
<evidence type="ECO:0000255" key="1"/>
<evidence type="ECO:0000269" key="2">
    <source>
    </source>
</evidence>
<evidence type="ECO:0000305" key="3"/>
<keyword id="KW-0963">Cytoplasm</keyword>
<keyword id="KW-0472">Membrane</keyword>
<keyword id="KW-0539">Nucleus</keyword>
<keyword id="KW-1185">Reference proteome</keyword>
<keyword id="KW-0812">Transmembrane</keyword>
<keyword id="KW-1133">Transmembrane helix</keyword>
<feature type="chain" id="PRO_0000372363" description="Uncharacterized protein C4C3.09">
    <location>
        <begin position="1"/>
        <end position="376"/>
    </location>
</feature>
<feature type="transmembrane region" description="Helical" evidence="1">
    <location>
        <begin position="19"/>
        <end position="39"/>
    </location>
</feature>
<dbReference type="EMBL" id="CU329671">
    <property type="protein sequence ID" value="CAA16831.1"/>
    <property type="molecule type" value="Genomic_DNA"/>
</dbReference>
<dbReference type="PIR" id="T40488">
    <property type="entry name" value="T40488"/>
</dbReference>
<dbReference type="SMR" id="O43062"/>
<dbReference type="BioGRID" id="277376">
    <property type="interactions" value="19"/>
</dbReference>
<dbReference type="FunCoup" id="O43062">
    <property type="interactions" value="842"/>
</dbReference>
<dbReference type="STRING" id="284812.O43062"/>
<dbReference type="CAZy" id="GT8">
    <property type="family name" value="Glycosyltransferase Family 8"/>
</dbReference>
<dbReference type="PaxDb" id="4896-SPBC4C3.09.1"/>
<dbReference type="EnsemblFungi" id="SPBC4C3.09.1">
    <property type="protein sequence ID" value="SPBC4C3.09.1:pep"/>
    <property type="gene ID" value="SPBC4C3.09"/>
</dbReference>
<dbReference type="KEGG" id="spo:2540859"/>
<dbReference type="PomBase" id="SPBC4C3.09"/>
<dbReference type="VEuPathDB" id="FungiDB:SPBC4C3.09"/>
<dbReference type="eggNOG" id="KOG1950">
    <property type="taxonomic scope" value="Eukaryota"/>
</dbReference>
<dbReference type="HOGENOM" id="CLU_048469_1_1_1"/>
<dbReference type="InParanoid" id="O43062"/>
<dbReference type="PhylomeDB" id="O43062"/>
<dbReference type="Reactome" id="R-SPO-6798695">
    <property type="pathway name" value="Neutrophil degranulation"/>
</dbReference>
<dbReference type="Reactome" id="R-SPO-70221">
    <property type="pathway name" value="Glycogen breakdown (glycogenolysis)"/>
</dbReference>
<dbReference type="PRO" id="PR:O43062"/>
<dbReference type="Proteomes" id="UP000002485">
    <property type="component" value="Chromosome II"/>
</dbReference>
<dbReference type="GO" id="GO:0005737">
    <property type="term" value="C:cytoplasm"/>
    <property type="evidence" value="ECO:0000318"/>
    <property type="project" value="GO_Central"/>
</dbReference>
<dbReference type="GO" id="GO:0005829">
    <property type="term" value="C:cytosol"/>
    <property type="evidence" value="ECO:0007005"/>
    <property type="project" value="PomBase"/>
</dbReference>
<dbReference type="GO" id="GO:0005794">
    <property type="term" value="C:Golgi apparatus"/>
    <property type="evidence" value="ECO:0000314"/>
    <property type="project" value="PomBase"/>
</dbReference>
<dbReference type="GO" id="GO:0016020">
    <property type="term" value="C:membrane"/>
    <property type="evidence" value="ECO:0007669"/>
    <property type="project" value="UniProtKB-SubCell"/>
</dbReference>
<dbReference type="GO" id="GO:0005634">
    <property type="term" value="C:nucleus"/>
    <property type="evidence" value="ECO:0007005"/>
    <property type="project" value="PomBase"/>
</dbReference>
<dbReference type="GO" id="GO:0001962">
    <property type="term" value="F:alpha-1,3-galactosyltransferase activity"/>
    <property type="evidence" value="ECO:0000314"/>
    <property type="project" value="PomBase"/>
</dbReference>
<dbReference type="GO" id="GO:0016757">
    <property type="term" value="F:glycosyltransferase activity"/>
    <property type="evidence" value="ECO:0000318"/>
    <property type="project" value="GO_Central"/>
</dbReference>
<dbReference type="GO" id="GO:0006487">
    <property type="term" value="P:protein N-linked glycosylation"/>
    <property type="evidence" value="ECO:0000316"/>
    <property type="project" value="PomBase"/>
</dbReference>
<dbReference type="GO" id="GO:0006493">
    <property type="term" value="P:protein O-linked glycosylation"/>
    <property type="evidence" value="ECO:0000269"/>
    <property type="project" value="PomBase"/>
</dbReference>
<dbReference type="Gene3D" id="3.90.550.10">
    <property type="entry name" value="Spore Coat Polysaccharide Biosynthesis Protein SpsA, Chain A"/>
    <property type="match status" value="1"/>
</dbReference>
<dbReference type="InterPro" id="IPR050587">
    <property type="entry name" value="GNT1/Glycosyltrans_8"/>
</dbReference>
<dbReference type="InterPro" id="IPR029044">
    <property type="entry name" value="Nucleotide-diphossugar_trans"/>
</dbReference>
<dbReference type="PANTHER" id="PTHR11183">
    <property type="entry name" value="GLYCOGENIN SUBFAMILY MEMBER"/>
    <property type="match status" value="1"/>
</dbReference>
<dbReference type="SUPFAM" id="SSF53448">
    <property type="entry name" value="Nucleotide-diphospho-sugar transferases"/>
    <property type="match status" value="1"/>
</dbReference>
<proteinExistence type="predicted"/>
<gene>
    <name type="ORF">SPBC4C3.09</name>
</gene>
<reference key="1">
    <citation type="journal article" date="2002" name="Nature">
        <title>The genome sequence of Schizosaccharomyces pombe.</title>
        <authorList>
            <person name="Wood V."/>
            <person name="Gwilliam R."/>
            <person name="Rajandream M.A."/>
            <person name="Lyne M.H."/>
            <person name="Lyne R."/>
            <person name="Stewart A."/>
            <person name="Sgouros J.G."/>
            <person name="Peat N."/>
            <person name="Hayles J."/>
            <person name="Baker S.G."/>
            <person name="Basham D."/>
            <person name="Bowman S."/>
            <person name="Brooks K."/>
            <person name="Brown D."/>
            <person name="Brown S."/>
            <person name="Chillingworth T."/>
            <person name="Churcher C.M."/>
            <person name="Collins M."/>
            <person name="Connor R."/>
            <person name="Cronin A."/>
            <person name="Davis P."/>
            <person name="Feltwell T."/>
            <person name="Fraser A."/>
            <person name="Gentles S."/>
            <person name="Goble A."/>
            <person name="Hamlin N."/>
            <person name="Harris D.E."/>
            <person name="Hidalgo J."/>
            <person name="Hodgson G."/>
            <person name="Holroyd S."/>
            <person name="Hornsby T."/>
            <person name="Howarth S."/>
            <person name="Huckle E.J."/>
            <person name="Hunt S."/>
            <person name="Jagels K."/>
            <person name="James K.D."/>
            <person name="Jones L."/>
            <person name="Jones M."/>
            <person name="Leather S."/>
            <person name="McDonald S."/>
            <person name="McLean J."/>
            <person name="Mooney P."/>
            <person name="Moule S."/>
            <person name="Mungall K.L."/>
            <person name="Murphy L.D."/>
            <person name="Niblett D."/>
            <person name="Odell C."/>
            <person name="Oliver K."/>
            <person name="O'Neil S."/>
            <person name="Pearson D."/>
            <person name="Quail M.A."/>
            <person name="Rabbinowitsch E."/>
            <person name="Rutherford K.M."/>
            <person name="Rutter S."/>
            <person name="Saunders D."/>
            <person name="Seeger K."/>
            <person name="Sharp S."/>
            <person name="Skelton J."/>
            <person name="Simmonds M.N."/>
            <person name="Squares R."/>
            <person name="Squares S."/>
            <person name="Stevens K."/>
            <person name="Taylor K."/>
            <person name="Taylor R.G."/>
            <person name="Tivey A."/>
            <person name="Walsh S.V."/>
            <person name="Warren T."/>
            <person name="Whitehead S."/>
            <person name="Woodward J.R."/>
            <person name="Volckaert G."/>
            <person name="Aert R."/>
            <person name="Robben J."/>
            <person name="Grymonprez B."/>
            <person name="Weltjens I."/>
            <person name="Vanstreels E."/>
            <person name="Rieger M."/>
            <person name="Schaefer M."/>
            <person name="Mueller-Auer S."/>
            <person name="Gabel C."/>
            <person name="Fuchs M."/>
            <person name="Duesterhoeft A."/>
            <person name="Fritzc C."/>
            <person name="Holzer E."/>
            <person name="Moestl D."/>
            <person name="Hilbert H."/>
            <person name="Borzym K."/>
            <person name="Langer I."/>
            <person name="Beck A."/>
            <person name="Lehrach H."/>
            <person name="Reinhardt R."/>
            <person name="Pohl T.M."/>
            <person name="Eger P."/>
            <person name="Zimmermann W."/>
            <person name="Wedler H."/>
            <person name="Wambutt R."/>
            <person name="Purnelle B."/>
            <person name="Goffeau A."/>
            <person name="Cadieu E."/>
            <person name="Dreano S."/>
            <person name="Gloux S."/>
            <person name="Lelaure V."/>
            <person name="Mottier S."/>
            <person name="Galibert F."/>
            <person name="Aves S.J."/>
            <person name="Xiang Z."/>
            <person name="Hunt C."/>
            <person name="Moore K."/>
            <person name="Hurst S.M."/>
            <person name="Lucas M."/>
            <person name="Rochet M."/>
            <person name="Gaillardin C."/>
            <person name="Tallada V.A."/>
            <person name="Garzon A."/>
            <person name="Thode G."/>
            <person name="Daga R.R."/>
            <person name="Cruzado L."/>
            <person name="Jimenez J."/>
            <person name="Sanchez M."/>
            <person name="del Rey F."/>
            <person name="Benito J."/>
            <person name="Dominguez A."/>
            <person name="Revuelta J.L."/>
            <person name="Moreno S."/>
            <person name="Armstrong J."/>
            <person name="Forsburg S.L."/>
            <person name="Cerutti L."/>
            <person name="Lowe T."/>
            <person name="McCombie W.R."/>
            <person name="Paulsen I."/>
            <person name="Potashkin J."/>
            <person name="Shpakovski G.V."/>
            <person name="Ussery D."/>
            <person name="Barrell B.G."/>
            <person name="Nurse P."/>
        </authorList>
    </citation>
    <scope>NUCLEOTIDE SEQUENCE [LARGE SCALE GENOMIC DNA]</scope>
    <source>
        <strain>972 / ATCC 24843</strain>
    </source>
</reference>
<reference key="2">
    <citation type="journal article" date="2006" name="Nat. Biotechnol.">
        <title>ORFeome cloning and global analysis of protein localization in the fission yeast Schizosaccharomyces pombe.</title>
        <authorList>
            <person name="Matsuyama A."/>
            <person name="Arai R."/>
            <person name="Yashiroda Y."/>
            <person name="Shirai A."/>
            <person name="Kamata A."/>
            <person name="Sekido S."/>
            <person name="Kobayashi Y."/>
            <person name="Hashimoto A."/>
            <person name="Hamamoto M."/>
            <person name="Hiraoka Y."/>
            <person name="Horinouchi S."/>
            <person name="Yoshida M."/>
        </authorList>
    </citation>
    <scope>SUBCELLULAR LOCATION [LARGE SCALE ANALYSIS]</scope>
</reference>
<organism>
    <name type="scientific">Schizosaccharomyces pombe (strain 972 / ATCC 24843)</name>
    <name type="common">Fission yeast</name>
    <dbReference type="NCBI Taxonomy" id="284812"/>
    <lineage>
        <taxon>Eukaryota</taxon>
        <taxon>Fungi</taxon>
        <taxon>Dikarya</taxon>
        <taxon>Ascomycota</taxon>
        <taxon>Taphrinomycotina</taxon>
        <taxon>Schizosaccharomycetes</taxon>
        <taxon>Schizosaccharomycetales</taxon>
        <taxon>Schizosaccharomycetaceae</taxon>
        <taxon>Schizosaccharomyces</taxon>
    </lineage>
</organism>
<comment type="subcellular location">
    <subcellularLocation>
        <location evidence="2">Cytoplasm</location>
    </subcellularLocation>
    <subcellularLocation>
        <location evidence="2">Nucleus</location>
    </subcellularLocation>
    <subcellularLocation>
        <location evidence="3">Membrane</location>
        <topology evidence="3">Single-pass membrane protein</topology>
    </subcellularLocation>
</comment>
<comment type="similarity">
    <text evidence="3">To S.pombe SpAC5H10.12c.</text>
</comment>
<sequence>MNFFKRLRLHTRLLLRSKFVLISLILLLNLGLLLGIQIYRDPAFPGSLISSAAYEFGLHKHGPYYNDNVDDLKRYTFMGLLTLPTSEHDVYFNATRVLVYKLKHHPETKSKYPVHVLVMKGVDEWKIERLRLDGAEIIMVDQIKTEDLIESGLSIGMGSYRYQYMFTKLSVFEQTQFDKVCILDSDLLVLKNMDDIFDTPYVYESPAEPDMFSFPIFKKPDDEEDYQFSDNFDAYGAPRSEFYPYLLGACDDRNPGHATPPEESETFNAGLMLVHPSSLHMHRIKKIARYPYMYDDARMMEQSLLNLAYNKYGWFPWTRLDFSYNGVWVTEEDLPYLRAAHGKFWEYDNTEFPQILTAEWHKAFGELLAFHDYVVE</sequence>
<name>YGT9_SCHPO</name>